<dbReference type="EC" id="3.4.24.-"/>
<dbReference type="EMBL" id="CP000438">
    <property type="protein sequence ID" value="ABJ11061.1"/>
    <property type="molecule type" value="Genomic_DNA"/>
</dbReference>
<dbReference type="RefSeq" id="WP_003139897.1">
    <property type="nucleotide sequence ID" value="NZ_CP034244.1"/>
</dbReference>
<dbReference type="SMR" id="Q02L18"/>
<dbReference type="MEROPS" id="M23.002"/>
<dbReference type="KEGG" id="pau:PA14_40290"/>
<dbReference type="PseudoCAP" id="PA14_40290"/>
<dbReference type="HOGENOM" id="CLU_656977_0_0_6"/>
<dbReference type="BioCyc" id="PAER208963:G1G74-3378-MONOMER"/>
<dbReference type="Proteomes" id="UP000000653">
    <property type="component" value="Chromosome"/>
</dbReference>
<dbReference type="GO" id="GO:0005576">
    <property type="term" value="C:extracellular region"/>
    <property type="evidence" value="ECO:0007669"/>
    <property type="project" value="UniProtKB-SubCell"/>
</dbReference>
<dbReference type="GO" id="GO:0046872">
    <property type="term" value="F:metal ion binding"/>
    <property type="evidence" value="ECO:0007669"/>
    <property type="project" value="UniProtKB-KW"/>
</dbReference>
<dbReference type="GO" id="GO:0004222">
    <property type="term" value="F:metalloendopeptidase activity"/>
    <property type="evidence" value="ECO:0007669"/>
    <property type="project" value="InterPro"/>
</dbReference>
<dbReference type="GO" id="GO:0006508">
    <property type="term" value="P:proteolysis"/>
    <property type="evidence" value="ECO:0007669"/>
    <property type="project" value="UniProtKB-KW"/>
</dbReference>
<dbReference type="CDD" id="cd12797">
    <property type="entry name" value="M23_peptidase"/>
    <property type="match status" value="1"/>
</dbReference>
<dbReference type="FunFam" id="2.70.70.10:FF:000044">
    <property type="entry name" value="Protease LasA"/>
    <property type="match status" value="1"/>
</dbReference>
<dbReference type="Gene3D" id="2.70.70.10">
    <property type="entry name" value="Glucose Permease (Domain IIA)"/>
    <property type="match status" value="1"/>
</dbReference>
<dbReference type="InterPro" id="IPR050570">
    <property type="entry name" value="Cell_wall_metabolism_enzyme"/>
</dbReference>
<dbReference type="InterPro" id="IPR011055">
    <property type="entry name" value="Dup_hybrid_motif"/>
</dbReference>
<dbReference type="InterPro" id="IPR000841">
    <property type="entry name" value="Pept_M23A_Blytic"/>
</dbReference>
<dbReference type="InterPro" id="IPR016047">
    <property type="entry name" value="Peptidase_M23"/>
</dbReference>
<dbReference type="PANTHER" id="PTHR21666:SF288">
    <property type="entry name" value="CELL DIVISION PROTEIN YTFB"/>
    <property type="match status" value="1"/>
</dbReference>
<dbReference type="PANTHER" id="PTHR21666">
    <property type="entry name" value="PEPTIDASE-RELATED"/>
    <property type="match status" value="1"/>
</dbReference>
<dbReference type="Pfam" id="PF01551">
    <property type="entry name" value="Peptidase_M23"/>
    <property type="match status" value="1"/>
</dbReference>
<dbReference type="PRINTS" id="PR00933">
    <property type="entry name" value="BLYTICPTASE"/>
</dbReference>
<dbReference type="SUPFAM" id="SSF51261">
    <property type="entry name" value="Duplicated hybrid motif"/>
    <property type="match status" value="1"/>
</dbReference>
<organism>
    <name type="scientific">Pseudomonas aeruginosa (strain UCBPP-PA14)</name>
    <dbReference type="NCBI Taxonomy" id="208963"/>
    <lineage>
        <taxon>Bacteria</taxon>
        <taxon>Pseudomonadati</taxon>
        <taxon>Pseudomonadota</taxon>
        <taxon>Gammaproteobacteria</taxon>
        <taxon>Pseudomonadales</taxon>
        <taxon>Pseudomonadaceae</taxon>
        <taxon>Pseudomonas</taxon>
    </lineage>
</organism>
<accession>Q02L18</accession>
<sequence length="418" mass="45556">MQHKRSRALASPRSPFLFALLALAVGGTANAHDDGLPAFRYSAELLGQLQLPSVALPLNDELFLYGRDAEAFDLEAYLALNAPALRDKSEYLEHWSGYYSINPKVLLTLMVMQSGPLGAPDERALAAPLGRLSAKRGFDAQVRDVLQQLSRRYYGFEEYQLRQAAARKAVGEDGLNAASAALLGLLREGAKASAVQGGNPLGAYAQTFQRLFGTPAAELLQPRNRVARQLQAKAALAPPSNLMQLPWRQGYSWQPNGAHSNTGSGYPYSSFDASYDWPRWGSATYSVVAAHAGTVRVLSRCQVRVTHPSGWATNYYHMDQIQVSNGQQVSADTKLGVYASNINTALCEGGSSTGPHLHFSLLYNGAFVSLQGASFGPYRINVGTSNYDNDCRRYYFYNQSAGTTHCAFRPLYNPGLAL</sequence>
<proteinExistence type="evidence at protein level"/>
<gene>
    <name type="primary">lasA</name>
    <name type="ordered locus">PA14_40290</name>
</gene>
<feature type="signal peptide" evidence="2">
    <location>
        <begin position="1"/>
        <end position="31"/>
    </location>
</feature>
<feature type="chain" id="PRO_0000431336" description="Protease LasA" evidence="2">
    <location>
        <begin position="32"/>
        <end position="418"/>
    </location>
</feature>
<feature type="propeptide" id="PRO_0000431335" evidence="1">
    <location>
        <begin position="32"/>
        <end position="236"/>
    </location>
</feature>
<feature type="active site" description="Proton donor/acceptor" evidence="1">
    <location>
        <position position="317"/>
    </location>
</feature>
<feature type="active site" description="Proton donor/acceptor" evidence="1">
    <location>
        <position position="356"/>
    </location>
</feature>
<feature type="binding site" evidence="1">
    <location>
        <position position="259"/>
    </location>
    <ligand>
        <name>Zn(2+)</name>
        <dbReference type="ChEBI" id="CHEBI:29105"/>
    </ligand>
</feature>
<feature type="binding site" evidence="1">
    <location>
        <position position="272"/>
    </location>
    <ligand>
        <name>Zn(2+)</name>
        <dbReference type="ChEBI" id="CHEBI:29105"/>
    </ligand>
</feature>
<feature type="binding site" evidence="1">
    <location>
        <position position="358"/>
    </location>
    <ligand>
        <name>Zn(2+)</name>
        <dbReference type="ChEBI" id="CHEBI:29105"/>
    </ligand>
</feature>
<feature type="disulfide bond" evidence="1">
    <location>
        <begin position="301"/>
        <end position="347"/>
    </location>
</feature>
<feature type="disulfide bond" evidence="1">
    <location>
        <begin position="391"/>
        <end position="406"/>
    </location>
</feature>
<keyword id="KW-1015">Disulfide bond</keyword>
<keyword id="KW-0378">Hydrolase</keyword>
<keyword id="KW-0479">Metal-binding</keyword>
<keyword id="KW-0482">Metalloprotease</keyword>
<keyword id="KW-0645">Protease</keyword>
<keyword id="KW-0964">Secreted</keyword>
<keyword id="KW-0732">Signal</keyword>
<keyword id="KW-0843">Virulence</keyword>
<keyword id="KW-0862">Zinc</keyword>
<keyword id="KW-0865">Zymogen</keyword>
<reference key="1">
    <citation type="journal article" date="2006" name="Genome Biol.">
        <title>Genomic analysis reveals that Pseudomonas aeruginosa virulence is combinatorial.</title>
        <authorList>
            <person name="Lee D.G."/>
            <person name="Urbach J.M."/>
            <person name="Wu G."/>
            <person name="Liberati N.T."/>
            <person name="Feinbaum R.L."/>
            <person name="Miyata S."/>
            <person name="Diggins L.T."/>
            <person name="He J."/>
            <person name="Saucier M."/>
            <person name="Deziel E."/>
            <person name="Friedman L."/>
            <person name="Li L."/>
            <person name="Grills G."/>
            <person name="Montgomery K."/>
            <person name="Kucherlapati R."/>
            <person name="Rahme L.G."/>
            <person name="Ausubel F.M."/>
        </authorList>
    </citation>
    <scope>NUCLEOTIDE SEQUENCE [LARGE SCALE GENOMIC DNA]</scope>
    <source>
        <strain>UCBPP-PA14</strain>
    </source>
</reference>
<reference key="2">
    <citation type="journal article" date="2014" name="Proteomics">
        <title>Extracellular Ser/Thr/Tyr phosphorylated proteins of Pseudomonas aeruginosa PA14 strain.</title>
        <authorList>
            <person name="Ouidir T."/>
            <person name="Jarnier F."/>
            <person name="Cosette P."/>
            <person name="Jouenne T."/>
            <person name="Hardouin J."/>
        </authorList>
    </citation>
    <scope>IDENTIFICATION BY MASS SPECTROMETRY</scope>
    <scope>SUBCELLULAR LOCATION</scope>
    <source>
        <strain>UCBPP-PA14</strain>
    </source>
</reference>
<protein>
    <recommendedName>
        <fullName>Protease LasA</fullName>
        <ecNumber>3.4.24.-</ecNumber>
    </recommendedName>
    <alternativeName>
        <fullName>Staphylolytic protease</fullName>
    </alternativeName>
</protein>
<evidence type="ECO:0000250" key="1">
    <source>
        <dbReference type="UniProtKB" id="P14789"/>
    </source>
</evidence>
<evidence type="ECO:0000255" key="2"/>
<evidence type="ECO:0000269" key="3">
    <source>
    </source>
</evidence>
<evidence type="ECO:0000305" key="4"/>
<name>LASA_PSEAB</name>
<comment type="function">
    <text evidence="1">Involved in proteolysis and elastolysis (degradation of the host protein elastin). Has staphylolytic activity (degrades pentaglycine cross-links in cell wall peptidoglycan), preferring Gly-Gly-|-X substrates where X is Ala or Gly. Enhances the elastolytic but not proteolytic activity of elastase (lasB) and elastolytic activity of other proteases. Degradation of elastin is likely to contribute to the pathogenicity of P.aeruginosa.</text>
</comment>
<comment type="cofactor">
    <cofactor evidence="1">
        <name>Zn(2+)</name>
        <dbReference type="ChEBI" id="CHEBI:29105"/>
    </cofactor>
    <text evidence="1">Binds 1 zinc ion per subunit.</text>
</comment>
<comment type="subcellular location">
    <subcellularLocation>
        <location evidence="3">Secreted</location>
    </subcellularLocation>
</comment>
<comment type="similarity">
    <text evidence="4">Belongs to the peptidase M23A family.</text>
</comment>